<feature type="chain" id="PRO_0000439804" description="Probable lysine/arginine permease CAN2">
    <location>
        <begin position="1"/>
        <end position="568"/>
    </location>
</feature>
<feature type="transmembrane region" description="Helical" evidence="2">
    <location>
        <begin position="66"/>
        <end position="86"/>
    </location>
</feature>
<feature type="transmembrane region" description="Helical" evidence="2">
    <location>
        <begin position="89"/>
        <end position="109"/>
    </location>
</feature>
<feature type="transmembrane region" description="Helical" evidence="2">
    <location>
        <begin position="145"/>
        <end position="165"/>
    </location>
</feature>
<feature type="transmembrane region" description="Helical" evidence="2">
    <location>
        <begin position="171"/>
        <end position="191"/>
    </location>
</feature>
<feature type="transmembrane region" description="Helical" evidence="2">
    <location>
        <begin position="201"/>
        <end position="221"/>
    </location>
</feature>
<feature type="transmembrane region" description="Helical" evidence="2">
    <location>
        <begin position="255"/>
        <end position="275"/>
    </location>
</feature>
<feature type="transmembrane region" description="Helical" evidence="2">
    <location>
        <begin position="294"/>
        <end position="314"/>
    </location>
</feature>
<feature type="transmembrane region" description="Helical" evidence="2">
    <location>
        <begin position="340"/>
        <end position="360"/>
    </location>
</feature>
<feature type="transmembrane region" description="Helical" evidence="2">
    <location>
        <begin position="390"/>
        <end position="410"/>
    </location>
</feature>
<feature type="transmembrane region" description="Helical" evidence="2">
    <location>
        <begin position="419"/>
        <end position="439"/>
    </location>
</feature>
<feature type="transmembrane region" description="Helical" evidence="2">
    <location>
        <begin position="469"/>
        <end position="489"/>
    </location>
</feature>
<feature type="transmembrane region" description="Helical" evidence="2">
    <location>
        <begin position="501"/>
        <end position="521"/>
    </location>
</feature>
<feature type="region of interest" description="Disordered" evidence="4">
    <location>
        <begin position="1"/>
        <end position="24"/>
    </location>
</feature>
<feature type="glycosylation site" description="N-linked (GlcNAc...) asparagine" evidence="3">
    <location>
        <position position="33"/>
    </location>
</feature>
<feature type="glycosylation site" description="N-linked (GlcNAc...) asparagine" evidence="3">
    <location>
        <position position="492"/>
    </location>
</feature>
<organism>
    <name type="scientific">Candida albicans (strain SC5314 / ATCC MYA-2876)</name>
    <name type="common">Yeast</name>
    <dbReference type="NCBI Taxonomy" id="237561"/>
    <lineage>
        <taxon>Eukaryota</taxon>
        <taxon>Fungi</taxon>
        <taxon>Dikarya</taxon>
        <taxon>Ascomycota</taxon>
        <taxon>Saccharomycotina</taxon>
        <taxon>Pichiomycetes</taxon>
        <taxon>Debaryomycetaceae</taxon>
        <taxon>Candida/Lodderomyces clade</taxon>
        <taxon>Candida</taxon>
    </lineage>
</organism>
<name>CAN2_CANAL</name>
<keyword id="KW-0029">Amino-acid transport</keyword>
<keyword id="KW-1003">Cell membrane</keyword>
<keyword id="KW-0325">Glycoprotein</keyword>
<keyword id="KW-0472">Membrane</keyword>
<keyword id="KW-1185">Reference proteome</keyword>
<keyword id="KW-0812">Transmembrane</keyword>
<keyword id="KW-1133">Transmembrane helix</keyword>
<keyword id="KW-0813">Transport</keyword>
<dbReference type="EMBL" id="CP017628">
    <property type="protein sequence ID" value="AOW30052.1"/>
    <property type="molecule type" value="Genomic_DNA"/>
</dbReference>
<dbReference type="RefSeq" id="XP_714319.1">
    <property type="nucleotide sequence ID" value="XM_709226.1"/>
</dbReference>
<dbReference type="SMR" id="Q59WU0"/>
<dbReference type="FunCoup" id="Q59WU0">
    <property type="interactions" value="190"/>
</dbReference>
<dbReference type="STRING" id="237561.Q59WU0"/>
<dbReference type="GlyCosmos" id="Q59WU0">
    <property type="glycosylation" value="2 sites, No reported glycans"/>
</dbReference>
<dbReference type="EnsemblFungi" id="C6_01060C_A-T">
    <property type="protein sequence ID" value="C6_01060C_A-T-p1"/>
    <property type="gene ID" value="C6_01060C_A"/>
</dbReference>
<dbReference type="GeneID" id="3644017"/>
<dbReference type="KEGG" id="cal:CAALFM_C601060CA"/>
<dbReference type="CGD" id="CAL0000192410">
    <property type="gene designation" value="CAN2"/>
</dbReference>
<dbReference type="VEuPathDB" id="FungiDB:C6_01060C_A"/>
<dbReference type="HOGENOM" id="CLU_007946_12_1_1"/>
<dbReference type="InParanoid" id="Q59WU0"/>
<dbReference type="OMA" id="TEEKHSH"/>
<dbReference type="OrthoDB" id="3900342at2759"/>
<dbReference type="Proteomes" id="UP000000559">
    <property type="component" value="Chromosome 6"/>
</dbReference>
<dbReference type="GO" id="GO:0016020">
    <property type="term" value="C:membrane"/>
    <property type="evidence" value="ECO:0000318"/>
    <property type="project" value="GO_Central"/>
</dbReference>
<dbReference type="GO" id="GO:0005886">
    <property type="term" value="C:plasma membrane"/>
    <property type="evidence" value="ECO:0007669"/>
    <property type="project" value="UniProtKB-SubCell"/>
</dbReference>
<dbReference type="GO" id="GO:0015171">
    <property type="term" value="F:amino acid transmembrane transporter activity"/>
    <property type="evidence" value="ECO:0000318"/>
    <property type="project" value="GO_Central"/>
</dbReference>
<dbReference type="GO" id="GO:0003333">
    <property type="term" value="P:amino acid transmembrane transport"/>
    <property type="evidence" value="ECO:0000318"/>
    <property type="project" value="GO_Central"/>
</dbReference>
<dbReference type="FunFam" id="1.20.1740.10:FF:000006">
    <property type="entry name" value="General amino acid permease"/>
    <property type="match status" value="1"/>
</dbReference>
<dbReference type="Gene3D" id="1.20.1740.10">
    <property type="entry name" value="Amino acid/polyamine transporter I"/>
    <property type="match status" value="1"/>
</dbReference>
<dbReference type="InterPro" id="IPR004841">
    <property type="entry name" value="AA-permease/SLC12A_dom"/>
</dbReference>
<dbReference type="InterPro" id="IPR004840">
    <property type="entry name" value="Amino_acid_permease_CS"/>
</dbReference>
<dbReference type="InterPro" id="IPR050524">
    <property type="entry name" value="APC_YAT"/>
</dbReference>
<dbReference type="PANTHER" id="PTHR43341">
    <property type="entry name" value="AMINO ACID PERMEASE"/>
    <property type="match status" value="1"/>
</dbReference>
<dbReference type="PANTHER" id="PTHR43341:SF4">
    <property type="entry name" value="ARGININE PERMEASE CAN1-RELATED"/>
    <property type="match status" value="1"/>
</dbReference>
<dbReference type="Pfam" id="PF00324">
    <property type="entry name" value="AA_permease"/>
    <property type="match status" value="1"/>
</dbReference>
<dbReference type="PIRSF" id="PIRSF006060">
    <property type="entry name" value="AA_transporter"/>
    <property type="match status" value="1"/>
</dbReference>
<dbReference type="PROSITE" id="PS00218">
    <property type="entry name" value="AMINO_ACID_PERMEASE_1"/>
    <property type="match status" value="1"/>
</dbReference>
<evidence type="ECO:0000250" key="1">
    <source>
        <dbReference type="UniProtKB" id="A0A1D8PPI5"/>
    </source>
</evidence>
<evidence type="ECO:0000255" key="2"/>
<evidence type="ECO:0000255" key="3">
    <source>
        <dbReference type="PROSITE-ProRule" id="PRU00498"/>
    </source>
</evidence>
<evidence type="ECO:0000256" key="4">
    <source>
        <dbReference type="SAM" id="MobiDB-lite"/>
    </source>
</evidence>
<evidence type="ECO:0000269" key="5">
    <source>
    </source>
</evidence>
<evidence type="ECO:0000269" key="6">
    <source>
    </source>
</evidence>
<evidence type="ECO:0000269" key="7">
    <source>
    </source>
</evidence>
<evidence type="ECO:0000269" key="8">
    <source>
    </source>
</evidence>
<evidence type="ECO:0000269" key="9">
    <source>
    </source>
</evidence>
<evidence type="ECO:0000269" key="10">
    <source>
    </source>
</evidence>
<evidence type="ECO:0000269" key="11">
    <source>
    </source>
</evidence>
<evidence type="ECO:0000303" key="12">
    <source>
    </source>
</evidence>
<evidence type="ECO:0000305" key="13"/>
<protein>
    <recommendedName>
        <fullName evidence="1">Probable lysine/arginine permease CAN2</fullName>
    </recommendedName>
    <alternativeName>
        <fullName evidence="13">Basic amino acids permease CAN2</fullName>
    </alternativeName>
</protein>
<comment type="function">
    <text evidence="1">Probable permease for arginine and lysine.</text>
</comment>
<comment type="subcellular location">
    <subcellularLocation>
        <location evidence="1">Cell membrane</location>
        <topology evidence="2">Multi-pass membrane protein</topology>
    </subcellularLocation>
</comment>
<comment type="induction">
    <text evidence="5 6 7 8 9 10 11">Expression is negatively regulated by the transcriptional repressors NRG1 and TUP1 (PubMed:11532938, PubMed:11737641). Expression is also regulated by SSN6 (PubMed:15814841). Expression is repressed by HAP43 (PubMed:21592964). Expression is induced by antifungal agents caspofungin and flucytosine (PubMed:15917516). Finally, expression is also induced during biofilm development (PubMed:19527170, PubMed:22265407).</text>
</comment>
<comment type="similarity">
    <text evidence="13">Belongs to the amino acid-polyamine-organocation (APC) superfamily. YAT (TC 2.A.3.10) family.</text>
</comment>
<gene>
    <name evidence="12" type="primary">CAN2</name>
    <name type="ordered locus">CAALFM_C601060CA</name>
</gene>
<reference key="1">
    <citation type="journal article" date="2004" name="Proc. Natl. Acad. Sci. U.S.A.">
        <title>The diploid genome sequence of Candida albicans.</title>
        <authorList>
            <person name="Jones T."/>
            <person name="Federspiel N.A."/>
            <person name="Chibana H."/>
            <person name="Dungan J."/>
            <person name="Kalman S."/>
            <person name="Magee B.B."/>
            <person name="Newport G."/>
            <person name="Thorstenson Y.R."/>
            <person name="Agabian N."/>
            <person name="Magee P.T."/>
            <person name="Davis R.W."/>
            <person name="Scherer S."/>
        </authorList>
    </citation>
    <scope>NUCLEOTIDE SEQUENCE [LARGE SCALE GENOMIC DNA]</scope>
    <source>
        <strain>SC5314 / ATCC MYA-2876</strain>
    </source>
</reference>
<reference key="2">
    <citation type="journal article" date="2007" name="Genome Biol.">
        <title>Assembly of the Candida albicans genome into sixteen supercontigs aligned on the eight chromosomes.</title>
        <authorList>
            <person name="van het Hoog M."/>
            <person name="Rast T.J."/>
            <person name="Martchenko M."/>
            <person name="Grindle S."/>
            <person name="Dignard D."/>
            <person name="Hogues H."/>
            <person name="Cuomo C."/>
            <person name="Berriman M."/>
            <person name="Scherer S."/>
            <person name="Magee B.B."/>
            <person name="Whiteway M."/>
            <person name="Chibana H."/>
            <person name="Nantel A."/>
            <person name="Magee P.T."/>
        </authorList>
    </citation>
    <scope>GENOME REANNOTATION</scope>
    <source>
        <strain>SC5314 / ATCC MYA-2876</strain>
    </source>
</reference>
<reference key="3">
    <citation type="journal article" date="2013" name="Genome Biol.">
        <title>Assembly of a phased diploid Candida albicans genome facilitates allele-specific measurements and provides a simple model for repeat and indel structure.</title>
        <authorList>
            <person name="Muzzey D."/>
            <person name="Schwartz K."/>
            <person name="Weissman J.S."/>
            <person name="Sherlock G."/>
        </authorList>
    </citation>
    <scope>NUCLEOTIDE SEQUENCE [LARGE SCALE GENOMIC DNA]</scope>
    <scope>GENOME REANNOTATION</scope>
    <source>
        <strain>SC5314 / ATCC MYA-2876</strain>
    </source>
</reference>
<reference key="4">
    <citation type="journal article" date="2001" name="EMBO J.">
        <title>NRG1 represses yeast-hypha morphogenesis and hypha-specific gene expression in Candida albicans.</title>
        <authorList>
            <person name="Murad A.M."/>
            <person name="Leng P."/>
            <person name="Straffon M."/>
            <person name="Wishart J."/>
            <person name="Macaskill S."/>
            <person name="MacCallum D."/>
            <person name="Schnell N."/>
            <person name="Talibi D."/>
            <person name="Marechal D."/>
            <person name="Tekaia F."/>
            <person name="d'Enfert C."/>
            <person name="Gaillardin C."/>
            <person name="Odds F.C."/>
            <person name="Brown A.J."/>
        </authorList>
    </citation>
    <scope>INDUCTION</scope>
</reference>
<reference key="5">
    <citation type="journal article" date="2001" name="Mol. Microbiol.">
        <title>Transcript profiling in Candida albicans reveals new cellular functions for the transcriptional repressors CaTup1, CaMig1 and CaNrg1.</title>
        <authorList>
            <person name="Murad A.M."/>
            <person name="d'Enfert C."/>
            <person name="Gaillardin C."/>
            <person name="Tournu H."/>
            <person name="Tekaia F."/>
            <person name="Talibi D."/>
            <person name="Marechal D."/>
            <person name="Marchais V."/>
            <person name="Cottin J."/>
            <person name="Brown A.J."/>
        </authorList>
    </citation>
    <scope>INDUCTION</scope>
</reference>
<reference key="6">
    <citation type="journal article" date="2005" name="Antimicrob. Agents Chemother.">
        <title>Genome-wide expression profiling of the response to azole, polyene, echinocandin, and pyrimidine antifungal agents in Candida albicans.</title>
        <authorList>
            <person name="Liu T.T."/>
            <person name="Lee R.E."/>
            <person name="Barker K.S."/>
            <person name="Lee R.E."/>
            <person name="Wei L."/>
            <person name="Homayouni R."/>
            <person name="Rogers P.D."/>
        </authorList>
    </citation>
    <scope>INDUCTION</scope>
</reference>
<reference key="7">
    <citation type="journal article" date="2005" name="Mol. Biol. Cell">
        <title>Global roles of Ssn6 in Tup1- and Nrg1-dependent gene regulation in the fungal pathogen, Candida albicans.</title>
        <authorList>
            <person name="Garcia-Sanchez S."/>
            <person name="Mavor A.L."/>
            <person name="Russell C.L."/>
            <person name="Argimon S."/>
            <person name="Dennison P."/>
            <person name="Enjalbert B."/>
            <person name="Brown A.J."/>
        </authorList>
    </citation>
    <scope>INDUCTION</scope>
</reference>
<reference key="8">
    <citation type="journal article" date="2009" name="J. Infect. Dis.">
        <title>Time course global gene expression analysis of an in vivo Candida biofilm.</title>
        <authorList>
            <person name="Nett J.E."/>
            <person name="Lepak A.J."/>
            <person name="Marchillo K."/>
            <person name="Andes D.R."/>
        </authorList>
    </citation>
    <scope>INDUCTION</scope>
</reference>
<reference key="9">
    <citation type="journal article" date="2011" name="J. Biol. Chem.">
        <title>Cap2-HAP complex is a critical transcriptional regulator that has dual but contrasting roles in regulation of iron homeostasis in Candida albicans.</title>
        <authorList>
            <person name="Singh R.P."/>
            <person name="Prasad H.K."/>
            <person name="Sinha I."/>
            <person name="Agarwal N."/>
            <person name="Natarajan K."/>
        </authorList>
    </citation>
    <scope>INDUCTION</scope>
</reference>
<reference key="10">
    <citation type="journal article" date="2012" name="Cell">
        <title>A recently evolved transcriptional network controls biofilm development in Candida albicans.</title>
        <authorList>
            <person name="Nobile C.J."/>
            <person name="Fox E.P."/>
            <person name="Nett J.E."/>
            <person name="Sorrells T.R."/>
            <person name="Mitrovich Q.M."/>
            <person name="Hernday A.D."/>
            <person name="Tuch B.B."/>
            <person name="Andes D.R."/>
            <person name="Johnson A.D."/>
        </authorList>
    </citation>
    <scope>INDUCTION</scope>
</reference>
<sequence length="568" mass="63145">MFEVGEKYPVESSSSSNDIESRGVQPITSLKDNKSIGMIEKDNDDLSCEQYSTCDEVKRDLKARHVSMIAIGGTIGTGLFISTGSLLHTTGPVMSLISFLFVTTLAYSVTQSLGEMTTYIPVSGSFAQFITRWVSKSCGAANGWLYWFSWAITFALELSVVGQVIQYWTDAVPLAGWISIFFVLLTTFNLFPVKYYGEVEFWIASTKVIAIVGWLIYAFCMVCGAGKTGPVGFRYWRNGYAWGDGMIVSNNGKYAISFINGLINAVFTFQGTELVAVTAGEASPRAIRSAIKKVMFRILVFYVLCMLFIGLLVPYNDPKLTQDGGFTRNSPFLIAMENSGTKVLPHIFNAVIVTTIISAGNSNVYSGSRILYGLAQAGVAPKFFLKTNKGGVPYFAVLFTAAFGALGYLACSEDGNKAFTWLLNIIATAGLIAWGFISVSHVRFMNVLRKRGLSRDILPYKAFFMPYSAYYAIIIIFIVVLIQGFTVFWDFNASDFFTAYISVILFVVLWIGFHFFFYGFGKDSFKWENILIPLDDCDIDSGVRDINDAEFDVPEPKNVWERFWLLIA</sequence>
<accession>Q59WU0</accession>
<proteinExistence type="evidence at transcript level"/>